<dbReference type="EMBL" id="M57963">
    <property type="protein sequence ID" value="AAA68895.1"/>
    <property type="molecule type" value="Genomic_DNA"/>
</dbReference>
<dbReference type="EMBL" id="L26406">
    <property type="protein sequence ID" value="AAB46937.1"/>
    <property type="molecule type" value="Genomic_DNA"/>
</dbReference>
<dbReference type="EMBL" id="CP001510">
    <property type="protein sequence ID" value="ACS40532.1"/>
    <property type="molecule type" value="Genomic_DNA"/>
</dbReference>
<dbReference type="PIR" id="A56621">
    <property type="entry name" value="CUPSAM"/>
</dbReference>
<dbReference type="RefSeq" id="WP_012753047.1">
    <property type="nucleotide sequence ID" value="NC_012808.1"/>
</dbReference>
<dbReference type="SMR" id="P04172"/>
<dbReference type="STRING" id="272630.MexAM1_META1p2774"/>
<dbReference type="KEGG" id="mea:Mex_1p2774"/>
<dbReference type="eggNOG" id="COG3794">
    <property type="taxonomic scope" value="Bacteria"/>
</dbReference>
<dbReference type="HOGENOM" id="CLU_084115_4_0_5"/>
<dbReference type="OrthoDB" id="9796416at2"/>
<dbReference type="UniPathway" id="UPA00895"/>
<dbReference type="Proteomes" id="UP000009081">
    <property type="component" value="Chromosome"/>
</dbReference>
<dbReference type="GO" id="GO:0042597">
    <property type="term" value="C:periplasmic space"/>
    <property type="evidence" value="ECO:0007669"/>
    <property type="project" value="UniProtKB-SubCell"/>
</dbReference>
<dbReference type="GO" id="GO:0005507">
    <property type="term" value="F:copper ion binding"/>
    <property type="evidence" value="ECO:0007669"/>
    <property type="project" value="InterPro"/>
</dbReference>
<dbReference type="GO" id="GO:0009055">
    <property type="term" value="F:electron transfer activity"/>
    <property type="evidence" value="ECO:0007669"/>
    <property type="project" value="InterPro"/>
</dbReference>
<dbReference type="CDD" id="cd13921">
    <property type="entry name" value="Amicyanin"/>
    <property type="match status" value="1"/>
</dbReference>
<dbReference type="Gene3D" id="2.60.40.420">
    <property type="entry name" value="Cupredoxins - blue copper proteins"/>
    <property type="match status" value="1"/>
</dbReference>
<dbReference type="InterPro" id="IPR035668">
    <property type="entry name" value="Amicyanin"/>
</dbReference>
<dbReference type="InterPro" id="IPR002386">
    <property type="entry name" value="Amicyanin/Pseudoazurin"/>
</dbReference>
<dbReference type="InterPro" id="IPR013475">
    <property type="entry name" value="Amicyanin_Para/Methyl"/>
</dbReference>
<dbReference type="InterPro" id="IPR000923">
    <property type="entry name" value="BlueCu_1"/>
</dbReference>
<dbReference type="InterPro" id="IPR028871">
    <property type="entry name" value="BlueCu_1_BS"/>
</dbReference>
<dbReference type="InterPro" id="IPR008972">
    <property type="entry name" value="Cupredoxin"/>
</dbReference>
<dbReference type="InterPro" id="IPR052721">
    <property type="entry name" value="ET_Amicyanin"/>
</dbReference>
<dbReference type="NCBIfam" id="TIGR02657">
    <property type="entry name" value="amicyanin"/>
    <property type="match status" value="1"/>
</dbReference>
<dbReference type="PANTHER" id="PTHR36507">
    <property type="entry name" value="BLL1555 PROTEIN"/>
    <property type="match status" value="1"/>
</dbReference>
<dbReference type="PANTHER" id="PTHR36507:SF1">
    <property type="entry name" value="BLL1555 PROTEIN"/>
    <property type="match status" value="1"/>
</dbReference>
<dbReference type="Pfam" id="PF00127">
    <property type="entry name" value="Copper-bind"/>
    <property type="match status" value="1"/>
</dbReference>
<dbReference type="PRINTS" id="PR00155">
    <property type="entry name" value="AMICYANIN"/>
</dbReference>
<dbReference type="SUPFAM" id="SSF49503">
    <property type="entry name" value="Cupredoxins"/>
    <property type="match status" value="1"/>
</dbReference>
<dbReference type="PROSITE" id="PS00196">
    <property type="entry name" value="COPPER_BLUE"/>
    <property type="match status" value="1"/>
</dbReference>
<evidence type="ECO:0000250" key="1"/>
<evidence type="ECO:0000269" key="2">
    <source>
    </source>
</evidence>
<sequence length="119" mass="12609">MRALAFAAALAAFSATAALAAGALEAVQEAPAGSTEVKIAKMKFQTPEVRIKAGSAVTWTNTEALPHNVHFKSGPGVEKDVEGPMLRSNQTYSVKFNAPGTYDYICTPHPFMKGKVVVE</sequence>
<gene>
    <name type="primary">mauC</name>
    <name type="ordered locus">MexAM1_META1p2774</name>
</gene>
<organism>
    <name type="scientific">Methylorubrum extorquens (strain ATCC 14718 / DSM 1338 / JCM 2805 / NCIMB 9133 / AM1)</name>
    <name type="common">Methylobacterium extorquens</name>
    <dbReference type="NCBI Taxonomy" id="272630"/>
    <lineage>
        <taxon>Bacteria</taxon>
        <taxon>Pseudomonadati</taxon>
        <taxon>Pseudomonadota</taxon>
        <taxon>Alphaproteobacteria</taxon>
        <taxon>Hyphomicrobiales</taxon>
        <taxon>Methylobacteriaceae</taxon>
        <taxon>Methylorubrum</taxon>
    </lineage>
</organism>
<reference key="1">
    <citation type="journal article" date="1991" name="J. Bacteriol.">
        <title>Genetic organization of methylamine utilization genes from Methylobacterium extorquens AM1.</title>
        <authorList>
            <person name="Chistoserdov A.Y."/>
            <person name="Tsygankov Y.D."/>
            <person name="Lidstrom M.E."/>
        </authorList>
    </citation>
    <scope>NUCLEOTIDE SEQUENCE [GENOMIC DNA]</scope>
</reference>
<reference key="2">
    <citation type="journal article" date="1994" name="J. Bacteriol.">
        <title>Genetic organization of the mau gene cluster in Methylobacterium extorquens AM1: complete nucleotide sequence and generation and characteristics of mau mutants.</title>
        <authorList>
            <person name="Chistoserdov A.Y."/>
            <person name="Chistoserdova L.V."/>
            <person name="McIntire W.S."/>
            <person name="Lidstrom M.E."/>
        </authorList>
    </citation>
    <scope>NUCLEOTIDE SEQUENCE [GENOMIC DNA]</scope>
</reference>
<reference key="3">
    <citation type="journal article" date="2009" name="PLoS ONE">
        <title>Methylobacterium genome sequences: a reference blueprint to investigate microbial metabolism of C1 compounds from natural and industrial sources.</title>
        <authorList>
            <person name="Vuilleumier S."/>
            <person name="Chistoserdova L."/>
            <person name="Lee M.-C."/>
            <person name="Bringel F."/>
            <person name="Lajus A."/>
            <person name="Zhou Y."/>
            <person name="Gourion B."/>
            <person name="Barbe V."/>
            <person name="Chang J."/>
            <person name="Cruveiller S."/>
            <person name="Dossat C."/>
            <person name="Gillett W."/>
            <person name="Gruffaz C."/>
            <person name="Haugen E."/>
            <person name="Hourcade E."/>
            <person name="Levy R."/>
            <person name="Mangenot S."/>
            <person name="Muller E."/>
            <person name="Nadalig T."/>
            <person name="Pagni M."/>
            <person name="Penny C."/>
            <person name="Peyraud R."/>
            <person name="Robinson D.G."/>
            <person name="Roche D."/>
            <person name="Rouy Z."/>
            <person name="Saenampechek C."/>
            <person name="Salvignol G."/>
            <person name="Vallenet D."/>
            <person name="Wu Z."/>
            <person name="Marx C.J."/>
            <person name="Vorholt J.A."/>
            <person name="Olson M.V."/>
            <person name="Kaul R."/>
            <person name="Weissenbach J."/>
            <person name="Medigue C."/>
            <person name="Lidstrom M.E."/>
        </authorList>
    </citation>
    <scope>NUCLEOTIDE SEQUENCE [LARGE SCALE GENOMIC DNA]</scope>
    <source>
        <strain>ATCC 14718 / DSM 1338 / JCM 2805 / NCIMB 9133 / AM1</strain>
    </source>
</reference>
<reference key="4">
    <citation type="journal article" date="1985" name="Biochem. J.">
        <title>The primary structures of Pseudomonas AM1 amicyanin and pseudoazurin. Two new sequence classes of blue copper proteins.</title>
        <authorList>
            <person name="Ambler R.P."/>
            <person name="Tobari J."/>
        </authorList>
    </citation>
    <scope>PROTEIN SEQUENCE OF 21-119</scope>
</reference>
<accession>P04172</accession>
<accession>C5ATK8</accession>
<protein>
    <recommendedName>
        <fullName>Amicyanin-alpha</fullName>
    </recommendedName>
</protein>
<comment type="function">
    <text>Primary acceptor of electrons from methylamine dehydrogenase. Passes those electrons on either a soluble cytochrome c or to pseudoazurin.</text>
</comment>
<comment type="cofactor">
    <cofactor>
        <name>Cu cation</name>
        <dbReference type="ChEBI" id="CHEBI:23378"/>
    </cofactor>
    <text>Binds 1 copper ion per subunit.</text>
</comment>
<comment type="pathway">
    <text>One-carbon metabolism; methylamine degradation.</text>
</comment>
<comment type="subcellular location">
    <subcellularLocation>
        <location>Periplasm</location>
    </subcellularLocation>
</comment>
<keyword id="KW-0186">Copper</keyword>
<keyword id="KW-0903">Direct protein sequencing</keyword>
<keyword id="KW-0249">Electron transport</keyword>
<keyword id="KW-0479">Metal-binding</keyword>
<keyword id="KW-0574">Periplasm</keyword>
<keyword id="KW-1185">Reference proteome</keyword>
<keyword id="KW-0732">Signal</keyword>
<keyword id="KW-0813">Transport</keyword>
<feature type="signal peptide" evidence="2">
    <location>
        <begin position="1"/>
        <end position="20"/>
    </location>
</feature>
<feature type="chain" id="PRO_0000002843" description="Amicyanin-alpha" evidence="2">
    <location>
        <begin position="21"/>
        <end position="119"/>
    </location>
</feature>
<feature type="domain" description="Plastocyanin-like">
    <location>
        <begin position="21"/>
        <end position="119"/>
    </location>
</feature>
<feature type="binding site" evidence="1">
    <location>
        <position position="67"/>
    </location>
    <ligand>
        <name>Cu cation</name>
        <dbReference type="ChEBI" id="CHEBI:23378"/>
    </ligand>
</feature>
<feature type="binding site" evidence="1">
    <location>
        <position position="106"/>
    </location>
    <ligand>
        <name>Cu cation</name>
        <dbReference type="ChEBI" id="CHEBI:23378"/>
    </ligand>
</feature>
<feature type="binding site" evidence="1">
    <location>
        <position position="109"/>
    </location>
    <ligand>
        <name>Cu cation</name>
        <dbReference type="ChEBI" id="CHEBI:23378"/>
    </ligand>
</feature>
<feature type="binding site" evidence="1">
    <location>
        <position position="112"/>
    </location>
    <ligand>
        <name>Cu cation</name>
        <dbReference type="ChEBI" id="CHEBI:23378"/>
    </ligand>
</feature>
<proteinExistence type="evidence at protein level"/>
<name>AMCY_METEA</name>